<keyword id="KW-0131">Cell cycle</keyword>
<keyword id="KW-0132">Cell division</keyword>
<keyword id="KW-0997">Cell inner membrane</keyword>
<keyword id="KW-1003">Cell membrane</keyword>
<keyword id="KW-0175">Coiled coil</keyword>
<keyword id="KW-0472">Membrane</keyword>
<keyword id="KW-1185">Reference proteome</keyword>
<keyword id="KW-0812">Transmembrane</keyword>
<keyword id="KW-1133">Transmembrane helix</keyword>
<sequence>MRFFQVGLLCLALFVQYRLWFGHNGVQDYTRLKSAVASHLQTNEKLIKRNKVLTADIEDLKLGHEGIEERARNELGMIKAGETFIRVLPAQQ</sequence>
<gene>
    <name evidence="1" type="primary">ftsB</name>
    <name type="ordered locus">PSHAa0683</name>
</gene>
<protein>
    <recommendedName>
        <fullName evidence="1">Cell division protein FtsB</fullName>
    </recommendedName>
</protein>
<evidence type="ECO:0000255" key="1">
    <source>
        <dbReference type="HAMAP-Rule" id="MF_00599"/>
    </source>
</evidence>
<dbReference type="EMBL" id="CR954246">
    <property type="protein sequence ID" value="CAI85767.1"/>
    <property type="molecule type" value="Genomic_DNA"/>
</dbReference>
<dbReference type="SMR" id="Q3IDQ7"/>
<dbReference type="STRING" id="326442.PSHAa0683"/>
<dbReference type="KEGG" id="pha:PSHAa0683"/>
<dbReference type="PATRIC" id="fig|326442.8.peg.646"/>
<dbReference type="eggNOG" id="COG2919">
    <property type="taxonomic scope" value="Bacteria"/>
</dbReference>
<dbReference type="HOGENOM" id="CLU_134863_5_2_6"/>
<dbReference type="BioCyc" id="PHAL326442:PSHA_RS03340-MONOMER"/>
<dbReference type="Proteomes" id="UP000006843">
    <property type="component" value="Chromosome I"/>
</dbReference>
<dbReference type="GO" id="GO:0032153">
    <property type="term" value="C:cell division site"/>
    <property type="evidence" value="ECO:0007669"/>
    <property type="project" value="UniProtKB-UniRule"/>
</dbReference>
<dbReference type="GO" id="GO:0030428">
    <property type="term" value="C:cell septum"/>
    <property type="evidence" value="ECO:0007669"/>
    <property type="project" value="TreeGrafter"/>
</dbReference>
<dbReference type="GO" id="GO:0005886">
    <property type="term" value="C:plasma membrane"/>
    <property type="evidence" value="ECO:0007669"/>
    <property type="project" value="UniProtKB-SubCell"/>
</dbReference>
<dbReference type="GO" id="GO:0043093">
    <property type="term" value="P:FtsZ-dependent cytokinesis"/>
    <property type="evidence" value="ECO:0007669"/>
    <property type="project" value="UniProtKB-UniRule"/>
</dbReference>
<dbReference type="HAMAP" id="MF_00599">
    <property type="entry name" value="FtsB"/>
    <property type="match status" value="1"/>
</dbReference>
<dbReference type="InterPro" id="IPR023081">
    <property type="entry name" value="Cell_div_FtsB"/>
</dbReference>
<dbReference type="InterPro" id="IPR007060">
    <property type="entry name" value="FtsL/DivIC"/>
</dbReference>
<dbReference type="NCBIfam" id="NF002058">
    <property type="entry name" value="PRK00888.1"/>
    <property type="match status" value="1"/>
</dbReference>
<dbReference type="PANTHER" id="PTHR37485">
    <property type="entry name" value="CELL DIVISION PROTEIN FTSB"/>
    <property type="match status" value="1"/>
</dbReference>
<dbReference type="PANTHER" id="PTHR37485:SF1">
    <property type="entry name" value="CELL DIVISION PROTEIN FTSB"/>
    <property type="match status" value="1"/>
</dbReference>
<dbReference type="Pfam" id="PF04977">
    <property type="entry name" value="DivIC"/>
    <property type="match status" value="1"/>
</dbReference>
<comment type="function">
    <text evidence="1">Essential cell division protein. May link together the upstream cell division proteins, which are predominantly cytoplasmic, with the downstream cell division proteins, which are predominantly periplasmic.</text>
</comment>
<comment type="subunit">
    <text evidence="1">Part of a complex composed of FtsB, FtsL and FtsQ.</text>
</comment>
<comment type="subcellular location">
    <subcellularLocation>
        <location evidence="1">Cell inner membrane</location>
        <topology evidence="1">Single-pass type II membrane protein</topology>
    </subcellularLocation>
    <text evidence="1">Localizes to the division septum.</text>
</comment>
<comment type="similarity">
    <text evidence="1">Belongs to the FtsB family.</text>
</comment>
<accession>Q3IDQ7</accession>
<proteinExistence type="inferred from homology"/>
<name>FTSB_PSET1</name>
<reference key="1">
    <citation type="journal article" date="2005" name="Genome Res.">
        <title>Coping with cold: the genome of the versatile marine Antarctica bacterium Pseudoalteromonas haloplanktis TAC125.</title>
        <authorList>
            <person name="Medigue C."/>
            <person name="Krin E."/>
            <person name="Pascal G."/>
            <person name="Barbe V."/>
            <person name="Bernsel A."/>
            <person name="Bertin P.N."/>
            <person name="Cheung F."/>
            <person name="Cruveiller S."/>
            <person name="D'Amico S."/>
            <person name="Duilio A."/>
            <person name="Fang G."/>
            <person name="Feller G."/>
            <person name="Ho C."/>
            <person name="Mangenot S."/>
            <person name="Marino G."/>
            <person name="Nilsson J."/>
            <person name="Parrilli E."/>
            <person name="Rocha E.P.C."/>
            <person name="Rouy Z."/>
            <person name="Sekowska A."/>
            <person name="Tutino M.L."/>
            <person name="Vallenet D."/>
            <person name="von Heijne G."/>
            <person name="Danchin A."/>
        </authorList>
    </citation>
    <scope>NUCLEOTIDE SEQUENCE [LARGE SCALE GENOMIC DNA]</scope>
    <source>
        <strain>TAC 125</strain>
    </source>
</reference>
<feature type="chain" id="PRO_1000025714" description="Cell division protein FtsB">
    <location>
        <begin position="1"/>
        <end position="92"/>
    </location>
</feature>
<feature type="topological domain" description="Cytoplasmic" evidence="1">
    <location>
        <begin position="1"/>
        <end position="3"/>
    </location>
</feature>
<feature type="transmembrane region" description="Helical" evidence="1">
    <location>
        <begin position="4"/>
        <end position="21"/>
    </location>
</feature>
<feature type="topological domain" description="Periplasmic" evidence="1">
    <location>
        <begin position="22"/>
        <end position="92"/>
    </location>
</feature>
<feature type="coiled-coil region" evidence="1">
    <location>
        <begin position="40"/>
        <end position="73"/>
    </location>
</feature>
<organism>
    <name type="scientific">Pseudoalteromonas translucida (strain TAC 125)</name>
    <dbReference type="NCBI Taxonomy" id="326442"/>
    <lineage>
        <taxon>Bacteria</taxon>
        <taxon>Pseudomonadati</taxon>
        <taxon>Pseudomonadota</taxon>
        <taxon>Gammaproteobacteria</taxon>
        <taxon>Alteromonadales</taxon>
        <taxon>Pseudoalteromonadaceae</taxon>
        <taxon>Pseudoalteromonas</taxon>
    </lineage>
</organism>